<proteinExistence type="inferred from homology"/>
<reference key="1">
    <citation type="submission" date="2007-11" db="EMBL/GenBank/DDBJ databases">
        <title>Complete sequence of chromosome of Shewanella baltica OS195.</title>
        <authorList>
            <consortium name="US DOE Joint Genome Institute"/>
            <person name="Copeland A."/>
            <person name="Lucas S."/>
            <person name="Lapidus A."/>
            <person name="Barry K."/>
            <person name="Glavina del Rio T."/>
            <person name="Dalin E."/>
            <person name="Tice H."/>
            <person name="Pitluck S."/>
            <person name="Chain P."/>
            <person name="Malfatti S."/>
            <person name="Shin M."/>
            <person name="Vergez L."/>
            <person name="Schmutz J."/>
            <person name="Larimer F."/>
            <person name="Land M."/>
            <person name="Hauser L."/>
            <person name="Kyrpides N."/>
            <person name="Kim E."/>
            <person name="Brettar I."/>
            <person name="Rodrigues J."/>
            <person name="Konstantinidis K."/>
            <person name="Klappenbach J."/>
            <person name="Hofle M."/>
            <person name="Tiedje J."/>
            <person name="Richardson P."/>
        </authorList>
    </citation>
    <scope>NUCLEOTIDE SEQUENCE [LARGE SCALE GENOMIC DNA]</scope>
    <source>
        <strain>OS195</strain>
    </source>
</reference>
<name>RECA_SHEB9</name>
<evidence type="ECO:0000255" key="1">
    <source>
        <dbReference type="HAMAP-Rule" id="MF_00268"/>
    </source>
</evidence>
<feature type="chain" id="PRO_1000078680" description="Protein RecA">
    <location>
        <begin position="1"/>
        <end position="355"/>
    </location>
</feature>
<feature type="binding site" evidence="1">
    <location>
        <begin position="67"/>
        <end position="74"/>
    </location>
    <ligand>
        <name>ATP</name>
        <dbReference type="ChEBI" id="CHEBI:30616"/>
    </ligand>
</feature>
<sequence>MKVDPNKEKALAAVLIQIEKQFGKGSIMKLGEDRSMDVETISTGSLSLDVALGAGGLPMGRIVEIYGPESSGKTTLTLEVIAAAQREGKTCAFIDAEHALDPIYAKKLGVDIDNLLCSQPDTGEQALEICDALTRSGAVDVIVVDSVAALTPKAEIEGEIGDSHMGLAARMMSQAMRKLAGNLKQSNTLLIFINQIRMKIGVMFGNPETTTGGNALKFYASVRLDIRRTGAIKDGDEVVGNETRVKVVKNKVAAPFKQAEFQILYGQGINRTGELVDLGVAHKLIEKAGAWYSYKGDKIGQGRANAGKYLTENPAIATEIDKTLRELLLSNPSALAAKDDASTEDNVDLETGEVF</sequence>
<dbReference type="EMBL" id="CP000891">
    <property type="protein sequence ID" value="ABX50431.1"/>
    <property type="molecule type" value="Genomic_DNA"/>
</dbReference>
<dbReference type="RefSeq" id="WP_006082606.1">
    <property type="nucleotide sequence ID" value="NC_009997.1"/>
</dbReference>
<dbReference type="SMR" id="A9KYG0"/>
<dbReference type="GeneID" id="11773324"/>
<dbReference type="KEGG" id="sbn:Sbal195_3269"/>
<dbReference type="HOGENOM" id="CLU_040469_3_2_6"/>
<dbReference type="Proteomes" id="UP000000770">
    <property type="component" value="Chromosome"/>
</dbReference>
<dbReference type="GO" id="GO:0005829">
    <property type="term" value="C:cytosol"/>
    <property type="evidence" value="ECO:0007669"/>
    <property type="project" value="TreeGrafter"/>
</dbReference>
<dbReference type="GO" id="GO:0005524">
    <property type="term" value="F:ATP binding"/>
    <property type="evidence" value="ECO:0007669"/>
    <property type="project" value="UniProtKB-UniRule"/>
</dbReference>
<dbReference type="GO" id="GO:0016887">
    <property type="term" value="F:ATP hydrolysis activity"/>
    <property type="evidence" value="ECO:0007669"/>
    <property type="project" value="InterPro"/>
</dbReference>
<dbReference type="GO" id="GO:0140664">
    <property type="term" value="F:ATP-dependent DNA damage sensor activity"/>
    <property type="evidence" value="ECO:0007669"/>
    <property type="project" value="InterPro"/>
</dbReference>
<dbReference type="GO" id="GO:0003684">
    <property type="term" value="F:damaged DNA binding"/>
    <property type="evidence" value="ECO:0007669"/>
    <property type="project" value="UniProtKB-UniRule"/>
</dbReference>
<dbReference type="GO" id="GO:0003697">
    <property type="term" value="F:single-stranded DNA binding"/>
    <property type="evidence" value="ECO:0007669"/>
    <property type="project" value="UniProtKB-UniRule"/>
</dbReference>
<dbReference type="GO" id="GO:0006310">
    <property type="term" value="P:DNA recombination"/>
    <property type="evidence" value="ECO:0007669"/>
    <property type="project" value="UniProtKB-UniRule"/>
</dbReference>
<dbReference type="GO" id="GO:0006281">
    <property type="term" value="P:DNA repair"/>
    <property type="evidence" value="ECO:0007669"/>
    <property type="project" value="UniProtKB-UniRule"/>
</dbReference>
<dbReference type="GO" id="GO:0009432">
    <property type="term" value="P:SOS response"/>
    <property type="evidence" value="ECO:0007669"/>
    <property type="project" value="UniProtKB-UniRule"/>
</dbReference>
<dbReference type="CDD" id="cd00983">
    <property type="entry name" value="RecA"/>
    <property type="match status" value="1"/>
</dbReference>
<dbReference type="FunFam" id="3.40.50.300:FF:000087">
    <property type="entry name" value="Recombinase RecA"/>
    <property type="match status" value="1"/>
</dbReference>
<dbReference type="Gene3D" id="3.40.50.300">
    <property type="entry name" value="P-loop containing nucleotide triphosphate hydrolases"/>
    <property type="match status" value="1"/>
</dbReference>
<dbReference type="HAMAP" id="MF_00268">
    <property type="entry name" value="RecA"/>
    <property type="match status" value="1"/>
</dbReference>
<dbReference type="InterPro" id="IPR003593">
    <property type="entry name" value="AAA+_ATPase"/>
</dbReference>
<dbReference type="InterPro" id="IPR013765">
    <property type="entry name" value="DNA_recomb/repair_RecA"/>
</dbReference>
<dbReference type="InterPro" id="IPR020584">
    <property type="entry name" value="DNA_recomb/repair_RecA_CS"/>
</dbReference>
<dbReference type="InterPro" id="IPR027417">
    <property type="entry name" value="P-loop_NTPase"/>
</dbReference>
<dbReference type="InterPro" id="IPR049261">
    <property type="entry name" value="RecA-like_C"/>
</dbReference>
<dbReference type="InterPro" id="IPR049428">
    <property type="entry name" value="RecA-like_N"/>
</dbReference>
<dbReference type="InterPro" id="IPR020588">
    <property type="entry name" value="RecA_ATP-bd"/>
</dbReference>
<dbReference type="InterPro" id="IPR023400">
    <property type="entry name" value="RecA_C_sf"/>
</dbReference>
<dbReference type="InterPro" id="IPR020587">
    <property type="entry name" value="RecA_monomer-monomer_interface"/>
</dbReference>
<dbReference type="NCBIfam" id="TIGR02012">
    <property type="entry name" value="tigrfam_recA"/>
    <property type="match status" value="1"/>
</dbReference>
<dbReference type="PANTHER" id="PTHR45900:SF1">
    <property type="entry name" value="MITOCHONDRIAL DNA REPAIR PROTEIN RECA HOMOLOG-RELATED"/>
    <property type="match status" value="1"/>
</dbReference>
<dbReference type="PANTHER" id="PTHR45900">
    <property type="entry name" value="RECA"/>
    <property type="match status" value="1"/>
</dbReference>
<dbReference type="Pfam" id="PF00154">
    <property type="entry name" value="RecA"/>
    <property type="match status" value="1"/>
</dbReference>
<dbReference type="Pfam" id="PF21096">
    <property type="entry name" value="RecA_C"/>
    <property type="match status" value="1"/>
</dbReference>
<dbReference type="PRINTS" id="PR00142">
    <property type="entry name" value="RECA"/>
</dbReference>
<dbReference type="SMART" id="SM00382">
    <property type="entry name" value="AAA"/>
    <property type="match status" value="1"/>
</dbReference>
<dbReference type="SUPFAM" id="SSF52540">
    <property type="entry name" value="P-loop containing nucleoside triphosphate hydrolases"/>
    <property type="match status" value="1"/>
</dbReference>
<dbReference type="SUPFAM" id="SSF54752">
    <property type="entry name" value="RecA protein, C-terminal domain"/>
    <property type="match status" value="1"/>
</dbReference>
<dbReference type="PROSITE" id="PS00321">
    <property type="entry name" value="RECA_1"/>
    <property type="match status" value="1"/>
</dbReference>
<dbReference type="PROSITE" id="PS50162">
    <property type="entry name" value="RECA_2"/>
    <property type="match status" value="1"/>
</dbReference>
<dbReference type="PROSITE" id="PS50163">
    <property type="entry name" value="RECA_3"/>
    <property type="match status" value="1"/>
</dbReference>
<protein>
    <recommendedName>
        <fullName evidence="1">Protein RecA</fullName>
    </recommendedName>
    <alternativeName>
        <fullName evidence="1">Recombinase A</fullName>
    </alternativeName>
</protein>
<comment type="function">
    <text evidence="1">Can catalyze the hydrolysis of ATP in the presence of single-stranded DNA, the ATP-dependent uptake of single-stranded DNA by duplex DNA, and the ATP-dependent hybridization of homologous single-stranded DNAs. It interacts with LexA causing its activation and leading to its autocatalytic cleavage.</text>
</comment>
<comment type="subcellular location">
    <subcellularLocation>
        <location evidence="1">Cytoplasm</location>
    </subcellularLocation>
</comment>
<comment type="similarity">
    <text evidence="1">Belongs to the RecA family.</text>
</comment>
<accession>A9KYG0</accession>
<keyword id="KW-0067">ATP-binding</keyword>
<keyword id="KW-0963">Cytoplasm</keyword>
<keyword id="KW-0227">DNA damage</keyword>
<keyword id="KW-0233">DNA recombination</keyword>
<keyword id="KW-0234">DNA repair</keyword>
<keyword id="KW-0238">DNA-binding</keyword>
<keyword id="KW-0547">Nucleotide-binding</keyword>
<keyword id="KW-0742">SOS response</keyword>
<organism>
    <name type="scientific">Shewanella baltica (strain OS195)</name>
    <dbReference type="NCBI Taxonomy" id="399599"/>
    <lineage>
        <taxon>Bacteria</taxon>
        <taxon>Pseudomonadati</taxon>
        <taxon>Pseudomonadota</taxon>
        <taxon>Gammaproteobacteria</taxon>
        <taxon>Alteromonadales</taxon>
        <taxon>Shewanellaceae</taxon>
        <taxon>Shewanella</taxon>
    </lineage>
</organism>
<gene>
    <name evidence="1" type="primary">recA</name>
    <name type="ordered locus">Sbal195_3269</name>
</gene>